<proteinExistence type="inferred from homology"/>
<evidence type="ECO:0000255" key="1">
    <source>
        <dbReference type="HAMAP-Rule" id="MF_01227"/>
    </source>
</evidence>
<organism>
    <name type="scientific">Anaplasma phagocytophilum (strain HZ)</name>
    <dbReference type="NCBI Taxonomy" id="212042"/>
    <lineage>
        <taxon>Bacteria</taxon>
        <taxon>Pseudomonadati</taxon>
        <taxon>Pseudomonadota</taxon>
        <taxon>Alphaproteobacteria</taxon>
        <taxon>Rickettsiales</taxon>
        <taxon>Anaplasmataceae</taxon>
        <taxon>Anaplasma</taxon>
        <taxon>phagocytophilum group</taxon>
    </lineage>
</organism>
<reference key="1">
    <citation type="journal article" date="2006" name="PLoS Genet.">
        <title>Comparative genomics of emerging human ehrlichiosis agents.</title>
        <authorList>
            <person name="Dunning Hotopp J.C."/>
            <person name="Lin M."/>
            <person name="Madupu R."/>
            <person name="Crabtree J."/>
            <person name="Angiuoli S.V."/>
            <person name="Eisen J.A."/>
            <person name="Seshadri R."/>
            <person name="Ren Q."/>
            <person name="Wu M."/>
            <person name="Utterback T.R."/>
            <person name="Smith S."/>
            <person name="Lewis M."/>
            <person name="Khouri H."/>
            <person name="Zhang C."/>
            <person name="Niu H."/>
            <person name="Lin Q."/>
            <person name="Ohashi N."/>
            <person name="Zhi N."/>
            <person name="Nelson W.C."/>
            <person name="Brinkac L.M."/>
            <person name="Dodson R.J."/>
            <person name="Rosovitz M.J."/>
            <person name="Sundaram J.P."/>
            <person name="Daugherty S.C."/>
            <person name="Davidsen T."/>
            <person name="Durkin A.S."/>
            <person name="Gwinn M.L."/>
            <person name="Haft D.H."/>
            <person name="Selengut J.D."/>
            <person name="Sullivan S.A."/>
            <person name="Zafar N."/>
            <person name="Zhou L."/>
            <person name="Benahmed F."/>
            <person name="Forberger H."/>
            <person name="Halpin R."/>
            <person name="Mulligan S."/>
            <person name="Robinson J."/>
            <person name="White O."/>
            <person name="Rikihisa Y."/>
            <person name="Tettelin H."/>
        </authorList>
    </citation>
    <scope>NUCLEOTIDE SEQUENCE [LARGE SCALE GENOMIC DNA]</scope>
    <source>
        <strain>HZ</strain>
    </source>
</reference>
<feature type="chain" id="PRO_0000266055" description="CTP synthase">
    <location>
        <begin position="1"/>
        <end position="541"/>
    </location>
</feature>
<feature type="domain" description="Glutamine amidotransferase type-1" evidence="1">
    <location>
        <begin position="296"/>
        <end position="537"/>
    </location>
</feature>
<feature type="region of interest" description="Amidoligase domain" evidence="1">
    <location>
        <begin position="1"/>
        <end position="271"/>
    </location>
</feature>
<feature type="active site" description="Nucleophile; for glutamine hydrolysis" evidence="1">
    <location>
        <position position="382"/>
    </location>
</feature>
<feature type="active site" evidence="1">
    <location>
        <position position="510"/>
    </location>
</feature>
<feature type="active site" evidence="1">
    <location>
        <position position="512"/>
    </location>
</feature>
<feature type="binding site" evidence="1">
    <location>
        <position position="19"/>
    </location>
    <ligand>
        <name>CTP</name>
        <dbReference type="ChEBI" id="CHEBI:37563"/>
        <note>allosteric inhibitor</note>
    </ligand>
</feature>
<feature type="binding site" evidence="1">
    <location>
        <position position="19"/>
    </location>
    <ligand>
        <name>UTP</name>
        <dbReference type="ChEBI" id="CHEBI:46398"/>
    </ligand>
</feature>
<feature type="binding site" evidence="1">
    <location>
        <begin position="20"/>
        <end position="25"/>
    </location>
    <ligand>
        <name>ATP</name>
        <dbReference type="ChEBI" id="CHEBI:30616"/>
    </ligand>
</feature>
<feature type="binding site" evidence="1">
    <location>
        <position position="77"/>
    </location>
    <ligand>
        <name>ATP</name>
        <dbReference type="ChEBI" id="CHEBI:30616"/>
    </ligand>
</feature>
<feature type="binding site" evidence="1">
    <location>
        <position position="77"/>
    </location>
    <ligand>
        <name>Mg(2+)</name>
        <dbReference type="ChEBI" id="CHEBI:18420"/>
    </ligand>
</feature>
<feature type="binding site" evidence="1">
    <location>
        <position position="145"/>
    </location>
    <ligand>
        <name>Mg(2+)</name>
        <dbReference type="ChEBI" id="CHEBI:18420"/>
    </ligand>
</feature>
<feature type="binding site" evidence="1">
    <location>
        <begin position="152"/>
        <end position="154"/>
    </location>
    <ligand>
        <name>CTP</name>
        <dbReference type="ChEBI" id="CHEBI:37563"/>
        <note>allosteric inhibitor</note>
    </ligand>
</feature>
<feature type="binding site" evidence="1">
    <location>
        <begin position="192"/>
        <end position="197"/>
    </location>
    <ligand>
        <name>CTP</name>
        <dbReference type="ChEBI" id="CHEBI:37563"/>
        <note>allosteric inhibitor</note>
    </ligand>
</feature>
<feature type="binding site" evidence="1">
    <location>
        <begin position="192"/>
        <end position="197"/>
    </location>
    <ligand>
        <name>UTP</name>
        <dbReference type="ChEBI" id="CHEBI:46398"/>
    </ligand>
</feature>
<feature type="binding site" evidence="1">
    <location>
        <position position="228"/>
    </location>
    <ligand>
        <name>CTP</name>
        <dbReference type="ChEBI" id="CHEBI:37563"/>
        <note>allosteric inhibitor</note>
    </ligand>
</feature>
<feature type="binding site" evidence="1">
    <location>
        <position position="228"/>
    </location>
    <ligand>
        <name>UTP</name>
        <dbReference type="ChEBI" id="CHEBI:46398"/>
    </ligand>
</feature>
<feature type="binding site" evidence="1">
    <location>
        <position position="355"/>
    </location>
    <ligand>
        <name>L-glutamine</name>
        <dbReference type="ChEBI" id="CHEBI:58359"/>
    </ligand>
</feature>
<feature type="binding site" evidence="1">
    <location>
        <begin position="383"/>
        <end position="386"/>
    </location>
    <ligand>
        <name>L-glutamine</name>
        <dbReference type="ChEBI" id="CHEBI:58359"/>
    </ligand>
</feature>
<feature type="binding site" evidence="1">
    <location>
        <position position="406"/>
    </location>
    <ligand>
        <name>L-glutamine</name>
        <dbReference type="ChEBI" id="CHEBI:58359"/>
    </ligand>
</feature>
<feature type="binding site" evidence="1">
    <location>
        <position position="465"/>
    </location>
    <ligand>
        <name>L-glutamine</name>
        <dbReference type="ChEBI" id="CHEBI:58359"/>
    </ligand>
</feature>
<sequence>MVGKLNPTRFIFVTGGVVSSLGKGLAAASIGALLQARGFSVRLRKLDPYLNVDPGTMSPAQHGEVFVTSDGGETDLDLGHYERFTGVMKTRADNVTAGKIYHELIVKERRGDYLGQTVQVIPHVIDLIISCILHNDAGADFVICEIGGTVGDIESQPFLEAIRQVSYRLSKNLTIFVHLTLVPYIGAVGELKTKPTQHSVKELSSLGIQPDIVLYRSRAQLPQYQCAKIANFCNVAEDNIIAALDVSNIYMLPVMYHEHRLDTQILKHFDVDSPEPDLTQWENVLRMSETASDRIVIAIVGKYVTSLDAYTSLEEALRHAGLHSGIRVEIKWVDARLPASEIDLTDADAILIPGGFGDNGIGTKICAIEYARVNNIPMLGICLGMQLAVIEFALNVAGIEDANSTEFKSDCKNPVVCELPGLQVGDEYKMGGSMRLGSYTCNLAPGSRIMSIYDSSTVVERRRHRYGINPEYRDVLSKCGLAFTGAAEDRDLPEVLELPDHPWFIGVQFHPEFQSTPFKSHPLFLSFVTSTLQVKKASSRS</sequence>
<accession>Q2GLS9</accession>
<dbReference type="EC" id="6.3.4.2" evidence="1"/>
<dbReference type="EMBL" id="CP000235">
    <property type="protein sequence ID" value="ABD43636.1"/>
    <property type="molecule type" value="Genomic_DNA"/>
</dbReference>
<dbReference type="RefSeq" id="WP_011450198.1">
    <property type="nucleotide sequence ID" value="NC_007797.1"/>
</dbReference>
<dbReference type="SMR" id="Q2GLS9"/>
<dbReference type="STRING" id="212042.APH_0038"/>
<dbReference type="MEROPS" id="C26.964"/>
<dbReference type="PaxDb" id="212042-APH_0038"/>
<dbReference type="EnsemblBacteria" id="ABD43636">
    <property type="protein sequence ID" value="ABD43636"/>
    <property type="gene ID" value="APH_0038"/>
</dbReference>
<dbReference type="KEGG" id="aph:APH_0038"/>
<dbReference type="eggNOG" id="COG0504">
    <property type="taxonomic scope" value="Bacteria"/>
</dbReference>
<dbReference type="HOGENOM" id="CLU_011675_5_0_5"/>
<dbReference type="UniPathway" id="UPA00159">
    <property type="reaction ID" value="UER00277"/>
</dbReference>
<dbReference type="Proteomes" id="UP000001943">
    <property type="component" value="Chromosome"/>
</dbReference>
<dbReference type="GO" id="GO:0005829">
    <property type="term" value="C:cytosol"/>
    <property type="evidence" value="ECO:0007669"/>
    <property type="project" value="TreeGrafter"/>
</dbReference>
<dbReference type="GO" id="GO:0005524">
    <property type="term" value="F:ATP binding"/>
    <property type="evidence" value="ECO:0007669"/>
    <property type="project" value="UniProtKB-KW"/>
</dbReference>
<dbReference type="GO" id="GO:0003883">
    <property type="term" value="F:CTP synthase activity"/>
    <property type="evidence" value="ECO:0007669"/>
    <property type="project" value="UniProtKB-UniRule"/>
</dbReference>
<dbReference type="GO" id="GO:0004359">
    <property type="term" value="F:glutaminase activity"/>
    <property type="evidence" value="ECO:0007669"/>
    <property type="project" value="RHEA"/>
</dbReference>
<dbReference type="GO" id="GO:0042802">
    <property type="term" value="F:identical protein binding"/>
    <property type="evidence" value="ECO:0007669"/>
    <property type="project" value="TreeGrafter"/>
</dbReference>
<dbReference type="GO" id="GO:0046872">
    <property type="term" value="F:metal ion binding"/>
    <property type="evidence" value="ECO:0007669"/>
    <property type="project" value="UniProtKB-KW"/>
</dbReference>
<dbReference type="GO" id="GO:0044210">
    <property type="term" value="P:'de novo' CTP biosynthetic process"/>
    <property type="evidence" value="ECO:0007669"/>
    <property type="project" value="UniProtKB-UniRule"/>
</dbReference>
<dbReference type="GO" id="GO:0019856">
    <property type="term" value="P:pyrimidine nucleobase biosynthetic process"/>
    <property type="evidence" value="ECO:0007669"/>
    <property type="project" value="TreeGrafter"/>
</dbReference>
<dbReference type="CDD" id="cd03113">
    <property type="entry name" value="CTPS_N"/>
    <property type="match status" value="1"/>
</dbReference>
<dbReference type="CDD" id="cd01746">
    <property type="entry name" value="GATase1_CTP_Synthase"/>
    <property type="match status" value="1"/>
</dbReference>
<dbReference type="FunFam" id="3.40.50.300:FF:000009">
    <property type="entry name" value="CTP synthase"/>
    <property type="match status" value="1"/>
</dbReference>
<dbReference type="FunFam" id="3.40.50.880:FF:000002">
    <property type="entry name" value="CTP synthase"/>
    <property type="match status" value="1"/>
</dbReference>
<dbReference type="Gene3D" id="3.40.50.880">
    <property type="match status" value="1"/>
</dbReference>
<dbReference type="Gene3D" id="3.40.50.300">
    <property type="entry name" value="P-loop containing nucleotide triphosphate hydrolases"/>
    <property type="match status" value="1"/>
</dbReference>
<dbReference type="HAMAP" id="MF_01227">
    <property type="entry name" value="PyrG"/>
    <property type="match status" value="1"/>
</dbReference>
<dbReference type="InterPro" id="IPR029062">
    <property type="entry name" value="Class_I_gatase-like"/>
</dbReference>
<dbReference type="InterPro" id="IPR004468">
    <property type="entry name" value="CTP_synthase"/>
</dbReference>
<dbReference type="InterPro" id="IPR017456">
    <property type="entry name" value="CTP_synthase_N"/>
</dbReference>
<dbReference type="InterPro" id="IPR017926">
    <property type="entry name" value="GATASE"/>
</dbReference>
<dbReference type="InterPro" id="IPR033828">
    <property type="entry name" value="GATase1_CTP_Synthase"/>
</dbReference>
<dbReference type="InterPro" id="IPR027417">
    <property type="entry name" value="P-loop_NTPase"/>
</dbReference>
<dbReference type="NCBIfam" id="NF003792">
    <property type="entry name" value="PRK05380.1"/>
    <property type="match status" value="1"/>
</dbReference>
<dbReference type="NCBIfam" id="TIGR00337">
    <property type="entry name" value="PyrG"/>
    <property type="match status" value="1"/>
</dbReference>
<dbReference type="PANTHER" id="PTHR11550">
    <property type="entry name" value="CTP SYNTHASE"/>
    <property type="match status" value="1"/>
</dbReference>
<dbReference type="PANTHER" id="PTHR11550:SF0">
    <property type="entry name" value="CTP SYNTHASE-RELATED"/>
    <property type="match status" value="1"/>
</dbReference>
<dbReference type="Pfam" id="PF06418">
    <property type="entry name" value="CTP_synth_N"/>
    <property type="match status" value="1"/>
</dbReference>
<dbReference type="Pfam" id="PF00117">
    <property type="entry name" value="GATase"/>
    <property type="match status" value="1"/>
</dbReference>
<dbReference type="SUPFAM" id="SSF52317">
    <property type="entry name" value="Class I glutamine amidotransferase-like"/>
    <property type="match status" value="1"/>
</dbReference>
<dbReference type="SUPFAM" id="SSF52540">
    <property type="entry name" value="P-loop containing nucleoside triphosphate hydrolases"/>
    <property type="match status" value="1"/>
</dbReference>
<dbReference type="PROSITE" id="PS51273">
    <property type="entry name" value="GATASE_TYPE_1"/>
    <property type="match status" value="1"/>
</dbReference>
<comment type="function">
    <text evidence="1">Catalyzes the ATP-dependent amination of UTP to CTP with either L-glutamine or ammonia as the source of nitrogen. Regulates intracellular CTP levels through interactions with the four ribonucleotide triphosphates.</text>
</comment>
<comment type="catalytic activity">
    <reaction evidence="1">
        <text>UTP + L-glutamine + ATP + H2O = CTP + L-glutamate + ADP + phosphate + 2 H(+)</text>
        <dbReference type="Rhea" id="RHEA:26426"/>
        <dbReference type="ChEBI" id="CHEBI:15377"/>
        <dbReference type="ChEBI" id="CHEBI:15378"/>
        <dbReference type="ChEBI" id="CHEBI:29985"/>
        <dbReference type="ChEBI" id="CHEBI:30616"/>
        <dbReference type="ChEBI" id="CHEBI:37563"/>
        <dbReference type="ChEBI" id="CHEBI:43474"/>
        <dbReference type="ChEBI" id="CHEBI:46398"/>
        <dbReference type="ChEBI" id="CHEBI:58359"/>
        <dbReference type="ChEBI" id="CHEBI:456216"/>
        <dbReference type="EC" id="6.3.4.2"/>
    </reaction>
</comment>
<comment type="catalytic activity">
    <reaction evidence="1">
        <text>L-glutamine + H2O = L-glutamate + NH4(+)</text>
        <dbReference type="Rhea" id="RHEA:15889"/>
        <dbReference type="ChEBI" id="CHEBI:15377"/>
        <dbReference type="ChEBI" id="CHEBI:28938"/>
        <dbReference type="ChEBI" id="CHEBI:29985"/>
        <dbReference type="ChEBI" id="CHEBI:58359"/>
    </reaction>
</comment>
<comment type="catalytic activity">
    <reaction evidence="1">
        <text>UTP + NH4(+) + ATP = CTP + ADP + phosphate + 2 H(+)</text>
        <dbReference type="Rhea" id="RHEA:16597"/>
        <dbReference type="ChEBI" id="CHEBI:15378"/>
        <dbReference type="ChEBI" id="CHEBI:28938"/>
        <dbReference type="ChEBI" id="CHEBI:30616"/>
        <dbReference type="ChEBI" id="CHEBI:37563"/>
        <dbReference type="ChEBI" id="CHEBI:43474"/>
        <dbReference type="ChEBI" id="CHEBI:46398"/>
        <dbReference type="ChEBI" id="CHEBI:456216"/>
    </reaction>
</comment>
<comment type="activity regulation">
    <text evidence="1">Allosterically activated by GTP, when glutamine is the substrate; GTP has no effect on the reaction when ammonia is the substrate. The allosteric effector GTP functions by stabilizing the protein conformation that binds the tetrahedral intermediate(s) formed during glutamine hydrolysis. Inhibited by the product CTP, via allosteric rather than competitive inhibition.</text>
</comment>
<comment type="pathway">
    <text evidence="1">Pyrimidine metabolism; CTP biosynthesis via de novo pathway; CTP from UDP: step 2/2.</text>
</comment>
<comment type="subunit">
    <text evidence="1">Homotetramer.</text>
</comment>
<comment type="miscellaneous">
    <text evidence="1">CTPSs have evolved a hybrid strategy for distinguishing between UTP and CTP. The overlapping regions of the product feedback inhibitory and substrate sites recognize a common feature in both compounds, the triphosphate moiety. To differentiate isosteric substrate and product pyrimidine rings, an additional pocket far from the expected kinase/ligase catalytic site, specifically recognizes the cytosine and ribose portions of the product inhibitor.</text>
</comment>
<comment type="similarity">
    <text evidence="1">Belongs to the CTP synthase family.</text>
</comment>
<name>PYRG_ANAPZ</name>
<gene>
    <name evidence="1" type="primary">pyrG</name>
    <name type="ordered locus">APH_0038</name>
</gene>
<protein>
    <recommendedName>
        <fullName evidence="1">CTP synthase</fullName>
        <ecNumber evidence="1">6.3.4.2</ecNumber>
    </recommendedName>
    <alternativeName>
        <fullName evidence="1">Cytidine 5'-triphosphate synthase</fullName>
    </alternativeName>
    <alternativeName>
        <fullName evidence="1">Cytidine triphosphate synthetase</fullName>
        <shortName evidence="1">CTP synthetase</shortName>
        <shortName evidence="1">CTPS</shortName>
    </alternativeName>
    <alternativeName>
        <fullName evidence="1">UTP--ammonia ligase</fullName>
    </alternativeName>
</protein>
<keyword id="KW-0067">ATP-binding</keyword>
<keyword id="KW-0315">Glutamine amidotransferase</keyword>
<keyword id="KW-0436">Ligase</keyword>
<keyword id="KW-0460">Magnesium</keyword>
<keyword id="KW-0479">Metal-binding</keyword>
<keyword id="KW-0547">Nucleotide-binding</keyword>
<keyword id="KW-0665">Pyrimidine biosynthesis</keyword>